<reference key="1">
    <citation type="journal article" date="2006" name="Science">
        <title>Large-scale sequence analysis of avian influenza isolates.</title>
        <authorList>
            <person name="Obenauer J.C."/>
            <person name="Denson J."/>
            <person name="Mehta P.K."/>
            <person name="Su X."/>
            <person name="Mukatira S."/>
            <person name="Finkelstein D.B."/>
            <person name="Xu X."/>
            <person name="Wang J."/>
            <person name="Ma J."/>
            <person name="Fan Y."/>
            <person name="Rakestraw K.M."/>
            <person name="Webster R.G."/>
            <person name="Hoffmann E."/>
            <person name="Krauss S."/>
            <person name="Zheng J."/>
            <person name="Zhang Z."/>
            <person name="Naeve C.W."/>
        </authorList>
    </citation>
    <scope>NUCLEOTIDE SEQUENCE [GENOMIC RNA]</scope>
</reference>
<reference key="2">
    <citation type="journal article" date="2004" name="Virus Res.">
        <title>Assembly and budding of influenza virus.</title>
        <authorList>
            <person name="Nayak D.P."/>
            <person name="Hui E.K."/>
            <person name="Barman S."/>
        </authorList>
    </citation>
    <scope>REVIEW</scope>
</reference>
<reference key="3">
    <citation type="journal article" date="2005" name="N. Engl. J. Med.">
        <title>Neuraminidase inhibitors for influenza.</title>
        <authorList>
            <person name="Moscona A."/>
        </authorList>
    </citation>
    <scope>REVIEW</scope>
</reference>
<reference key="4">
    <citation type="journal article" date="2005" name="Biol. Pharm. Bull.">
        <title>Sialobiology of influenza: molecular mechanism of host range variation of influenza viruses.</title>
        <authorList>
            <person name="Suzuki Y."/>
        </authorList>
    </citation>
    <scope>REVIEW</scope>
</reference>
<keyword id="KW-0106">Calcium</keyword>
<keyword id="KW-1015">Disulfide bond</keyword>
<keyword id="KW-0325">Glycoprotein</keyword>
<keyword id="KW-0326">Glycosidase</keyword>
<keyword id="KW-1032">Host cell membrane</keyword>
<keyword id="KW-1043">Host membrane</keyword>
<keyword id="KW-0378">Hydrolase</keyword>
<keyword id="KW-0472">Membrane</keyword>
<keyword id="KW-0479">Metal-binding</keyword>
<keyword id="KW-0735">Signal-anchor</keyword>
<keyword id="KW-0812">Transmembrane</keyword>
<keyword id="KW-1133">Transmembrane helix</keyword>
<keyword id="KW-0946">Virion</keyword>
<proteinExistence type="inferred from homology"/>
<name>NRAM_I83A4</name>
<evidence type="ECO:0000255" key="1">
    <source>
        <dbReference type="HAMAP-Rule" id="MF_04071"/>
    </source>
</evidence>
<organism>
    <name type="scientific">Influenza A virus (strain A/Turkey/Ireland/1378/1983 H5N8)</name>
    <dbReference type="NCBI Taxonomy" id="380285"/>
    <lineage>
        <taxon>Viruses</taxon>
        <taxon>Riboviria</taxon>
        <taxon>Orthornavirae</taxon>
        <taxon>Negarnaviricota</taxon>
        <taxon>Polyploviricotina</taxon>
        <taxon>Insthoviricetes</taxon>
        <taxon>Articulavirales</taxon>
        <taxon>Orthomyxoviridae</taxon>
        <taxon>Alphainfluenzavirus</taxon>
        <taxon>Alphainfluenzavirus influenzae</taxon>
        <taxon>Influenza A virus</taxon>
    </lineage>
</organism>
<feature type="chain" id="PRO_0000280152" description="Neuraminidase">
    <location>
        <begin position="1"/>
        <end position="470"/>
    </location>
</feature>
<feature type="topological domain" description="Intravirion" evidence="1">
    <location>
        <begin position="1"/>
        <end position="14"/>
    </location>
</feature>
<feature type="transmembrane region" description="Helical" evidence="1">
    <location>
        <begin position="15"/>
        <end position="35"/>
    </location>
</feature>
<feature type="topological domain" description="Virion surface" evidence="1">
    <location>
        <begin position="36"/>
        <end position="470"/>
    </location>
</feature>
<feature type="region of interest" description="Involved in apical transport and lipid raft association" evidence="1">
    <location>
        <begin position="11"/>
        <end position="32"/>
    </location>
</feature>
<feature type="region of interest" description="Hypervariable stalk region" evidence="1">
    <location>
        <begin position="32"/>
        <end position="86"/>
    </location>
</feature>
<feature type="region of interest" description="Head of neuraminidase" evidence="1">
    <location>
        <begin position="89"/>
        <end position="470"/>
    </location>
</feature>
<feature type="active site" description="Proton donor/acceptor" evidence="1">
    <location>
        <position position="149"/>
    </location>
</feature>
<feature type="active site" description="Nucleophile" evidence="1">
    <location>
        <position position="402"/>
    </location>
</feature>
<feature type="binding site" evidence="1">
    <location>
        <position position="116"/>
    </location>
    <ligand>
        <name>substrate</name>
    </ligand>
</feature>
<feature type="binding site" evidence="1">
    <location>
        <position position="150"/>
    </location>
    <ligand>
        <name>substrate</name>
    </ligand>
</feature>
<feature type="binding site" evidence="1">
    <location>
        <begin position="275"/>
        <end position="276"/>
    </location>
    <ligand>
        <name>substrate</name>
    </ligand>
</feature>
<feature type="binding site" evidence="1">
    <location>
        <position position="291"/>
    </location>
    <ligand>
        <name>substrate</name>
    </ligand>
</feature>
<feature type="binding site" evidence="1">
    <location>
        <position position="292"/>
    </location>
    <ligand>
        <name>Ca(2+)</name>
        <dbReference type="ChEBI" id="CHEBI:29108"/>
    </ligand>
</feature>
<feature type="binding site" evidence="1">
    <location>
        <position position="296"/>
    </location>
    <ligand>
        <name>Ca(2+)</name>
        <dbReference type="ChEBI" id="CHEBI:29108"/>
    </ligand>
</feature>
<feature type="binding site" evidence="1">
    <location>
        <position position="322"/>
    </location>
    <ligand>
        <name>Ca(2+)</name>
        <dbReference type="ChEBI" id="CHEBI:29108"/>
    </ligand>
</feature>
<feature type="binding site" evidence="1">
    <location>
        <position position="368"/>
    </location>
    <ligand>
        <name>substrate</name>
    </ligand>
</feature>
<feature type="glycosylation site" description="N-linked (GlcNAc...) asparagine; by host" evidence="1">
    <location>
        <position position="46"/>
    </location>
</feature>
<feature type="glycosylation site" description="N-linked (GlcNAc...) asparagine; by host" evidence="1">
    <location>
        <position position="54"/>
    </location>
</feature>
<feature type="glycosylation site" description="N-linked (GlcNAc...) asparagine; by host" evidence="1">
    <location>
        <position position="84"/>
    </location>
</feature>
<feature type="glycosylation site" description="N-linked (GlcNAc...) asparagine; by host" evidence="1">
    <location>
        <position position="144"/>
    </location>
</feature>
<feature type="glycosylation site" description="N-linked (GlcNAc...) asparagine; by host" evidence="1">
    <location>
        <position position="293"/>
    </location>
</feature>
<feature type="glycosylation site" description="N-linked (GlcNAc...) asparagine; by host" evidence="1">
    <location>
        <position position="398"/>
    </location>
</feature>
<feature type="disulfide bond" evidence="1">
    <location>
        <begin position="90"/>
        <end position="417"/>
    </location>
</feature>
<feature type="disulfide bond" evidence="1">
    <location>
        <begin position="122"/>
        <end position="127"/>
    </location>
</feature>
<feature type="disulfide bond" evidence="1">
    <location>
        <begin position="182"/>
        <end position="229"/>
    </location>
</feature>
<feature type="disulfide bond" evidence="1">
    <location>
        <begin position="231"/>
        <end position="236"/>
    </location>
</feature>
<feature type="disulfide bond" evidence="1">
    <location>
        <begin position="277"/>
        <end position="290"/>
    </location>
</feature>
<feature type="disulfide bond" evidence="1">
    <location>
        <begin position="279"/>
        <end position="288"/>
    </location>
</feature>
<feature type="disulfide bond" evidence="1">
    <location>
        <begin position="316"/>
        <end position="335"/>
    </location>
</feature>
<feature type="disulfide bond" evidence="1">
    <location>
        <begin position="421"/>
        <end position="446"/>
    </location>
</feature>
<protein>
    <recommendedName>
        <fullName evidence="1">Neuraminidase</fullName>
        <ecNumber evidence="1">3.2.1.18</ecNumber>
    </recommendedName>
</protein>
<accession>Q0A2G2</accession>
<gene>
    <name evidence="1" type="primary">NA</name>
</gene>
<organismHost>
    <name type="scientific">Aves</name>
    <dbReference type="NCBI Taxonomy" id="8782"/>
</organismHost>
<comment type="function">
    <text evidence="1">Catalyzes the removal of terminal sialic acid residues from viral and cellular glycoconjugates. Cleaves off the terminal sialic acids on the glycosylated HA during virus budding to facilitate virus release. Additionally helps virus spread through the circulation by further removing sialic acids from the cell surface. These cleavages prevent self-aggregation and ensure the efficient spread of the progeny virus from cell to cell. Otherwise, infection would be limited to one round of replication. Described as a receptor-destroying enzyme because it cleaves a terminal sialic acid from the cellular receptors. May facilitate viral invasion of the upper airways by cleaving the sialic acid moieties on the mucin of the airway epithelial cells. Likely to plays a role in the budding process through its association with lipid rafts during intracellular transport. May additionally display a raft-association independent effect on budding. Plays a role in the determination of host range restriction on replication and virulence. Sialidase activity in late endosome/lysosome traffic seems to enhance virus replication.</text>
</comment>
<comment type="catalytic activity">
    <reaction evidence="1">
        <text>Hydrolysis of alpha-(2-&gt;3)-, alpha-(2-&gt;6)-, alpha-(2-&gt;8)- glycosidic linkages of terminal sialic acid residues in oligosaccharides, glycoproteins, glycolipids, colominic acid and synthetic substrates.</text>
        <dbReference type="EC" id="3.2.1.18"/>
    </reaction>
</comment>
<comment type="cofactor">
    <cofactor evidence="1">
        <name>Ca(2+)</name>
        <dbReference type="ChEBI" id="CHEBI:29108"/>
    </cofactor>
</comment>
<comment type="activity regulation">
    <text evidence="1">Inhibited by the neuraminidase inhibitors zanamivir (Relenza) and oseltamivir (Tamiflu). These drugs interfere with the release of progeny virus from infected cells and are effective against all influenza strains. Resistance to neuraminidase inhibitors is quite rare.</text>
</comment>
<comment type="subunit">
    <text evidence="1">Homotetramer.</text>
</comment>
<comment type="subcellular location">
    <subcellularLocation>
        <location evidence="1">Virion membrane</location>
    </subcellularLocation>
    <subcellularLocation>
        <location evidence="1">Host apical cell membrane</location>
        <topology evidence="1">Single-pass type II membrane protein</topology>
    </subcellularLocation>
    <text evidence="1">Preferentially accumulates at the apical plasma membrane in infected polarized epithelial cells, which is the virus assembly site. Uses lipid rafts for cell surface transport and apical sorting. In the virion, forms a mushroom-shaped spike on the surface of the membrane.</text>
</comment>
<comment type="domain">
    <text evidence="1">Intact N-terminus is essential for virion morphogenesis. Possesses two apical sorting signals, one in the ectodomain, which is likely to be a glycan, and the other in the transmembrane domain. The transmembrane domain also plays a role in lipid raft association.</text>
</comment>
<comment type="PTM">
    <text evidence="1">N-glycosylated.</text>
</comment>
<comment type="miscellaneous">
    <text>The influenza A genome consist of 8 RNA segments. Genetic variation of hemagglutinin and/or neuraminidase genes results in the emergence of new influenza strains. The mechanism of variation can be the result of point mutations or the result of genetic reassortment between segments of two different strains.</text>
</comment>
<comment type="similarity">
    <text evidence="1">Belongs to the glycosyl hydrolase 34 family.</text>
</comment>
<dbReference type="EC" id="3.2.1.18" evidence="1"/>
<dbReference type="EMBL" id="CY015091">
    <property type="protein sequence ID" value="ABI85120.1"/>
    <property type="molecule type" value="Genomic_RNA"/>
</dbReference>
<dbReference type="SMR" id="Q0A2G2"/>
<dbReference type="CAZy" id="GH34">
    <property type="family name" value="Glycoside Hydrolase Family 34"/>
</dbReference>
<dbReference type="GlyCosmos" id="Q0A2G2">
    <property type="glycosylation" value="6 sites, No reported glycans"/>
</dbReference>
<dbReference type="Proteomes" id="UP000008583">
    <property type="component" value="Genome"/>
</dbReference>
<dbReference type="GO" id="GO:0020002">
    <property type="term" value="C:host cell plasma membrane"/>
    <property type="evidence" value="ECO:0007669"/>
    <property type="project" value="UniProtKB-SubCell"/>
</dbReference>
<dbReference type="GO" id="GO:0016020">
    <property type="term" value="C:membrane"/>
    <property type="evidence" value="ECO:0007669"/>
    <property type="project" value="UniProtKB-UniRule"/>
</dbReference>
<dbReference type="GO" id="GO:0055036">
    <property type="term" value="C:virion membrane"/>
    <property type="evidence" value="ECO:0007669"/>
    <property type="project" value="UniProtKB-SubCell"/>
</dbReference>
<dbReference type="GO" id="GO:0004308">
    <property type="term" value="F:exo-alpha-sialidase activity"/>
    <property type="evidence" value="ECO:0007669"/>
    <property type="project" value="UniProtKB-UniRule"/>
</dbReference>
<dbReference type="GO" id="GO:0046872">
    <property type="term" value="F:metal ion binding"/>
    <property type="evidence" value="ECO:0007669"/>
    <property type="project" value="UniProtKB-UniRule"/>
</dbReference>
<dbReference type="GO" id="GO:0005975">
    <property type="term" value="P:carbohydrate metabolic process"/>
    <property type="evidence" value="ECO:0007669"/>
    <property type="project" value="InterPro"/>
</dbReference>
<dbReference type="GO" id="GO:0046761">
    <property type="term" value="P:viral budding from plasma membrane"/>
    <property type="evidence" value="ECO:0007669"/>
    <property type="project" value="UniProtKB-UniRule"/>
</dbReference>
<dbReference type="Gene3D" id="2.120.10.10">
    <property type="match status" value="1"/>
</dbReference>
<dbReference type="HAMAP" id="MF_04071">
    <property type="entry name" value="INFV_NRAM"/>
    <property type="match status" value="1"/>
</dbReference>
<dbReference type="InterPro" id="IPR001860">
    <property type="entry name" value="Glyco_hydro_34"/>
</dbReference>
<dbReference type="InterPro" id="IPR036278">
    <property type="entry name" value="Sialidase_sf"/>
</dbReference>
<dbReference type="Pfam" id="PF00064">
    <property type="entry name" value="Neur"/>
    <property type="match status" value="1"/>
</dbReference>
<dbReference type="SUPFAM" id="SSF50939">
    <property type="entry name" value="Sialidases"/>
    <property type="match status" value="1"/>
</dbReference>
<sequence length="470" mass="51981">MNPNQKIITIGSISLGLVVFNVLLHVVSIIVTVLILGKGENNGICNGTVVREYNETVRIERVTQWHNTNVVEYVPYWNGGTYMNNTEAICDVKGFAPFSNDNGIRIGSRGHVFVIREPFVSCSPIECRAFFLTQGSLLNDKHSNGTVKDRSPFRTLMSVEVGQSPNVYQARFEAVAWSATACHDGKKWMTVGVTGPDSKAVAVIHYGGVPTDVVNSWVGDILRTQESSCTCIQGDCYWVMTDGPANRQAQYRIYKANQGRIIGQTDVSFNGGHIEECSCYPNDGKVECVCRDNWTGTNRPVLVISPDLSYRVGYLCAGIPSDTPRGEDAQFTGSCTSPIGNQGYGVKGFGFRQGTDVWMGRTISRTSRSGFEILRIKNGWTQTSKEQVKRQVVVDNLNWSGYSGSFTLPVELSGKDCLVPCFWVEMIRGKPEEKTIWTSSSSIVMCGVDYEVADWSWHDGAILPFDIDKM</sequence>